<sequence length="428" mass="47087">MSVVGTPKSAEQIQQEWDTNPRWKDVTRTYSAEDVVALQGSVVEEHTLARRGAEVLWEQLHDLEWVNALGALTGNMAVQQVRAGLKAIYLSGWQVAGDANLSGHTYPDQSLYPANSVPQVVRRINNALQRADQIAKIEGDTSVENWLAPIVADGEAGFGGALNVYELQKALIAAGVAGSHWEDQLASEKKCGHLGGKVLIPTQQHIRTLTSARLAADVADVPTVVIARTDAEAATLITSDVDERDQPFITGERTREGFYRTKNGIEPCIARAKAYAPFADLIWMETGTPDLEAARQFSEAVKAEYPDQMLAYNCSPSFNWKKHLDDATIAKFQKELAAMGFKFQFITLAGFHALNYSMFDLAYGYAQNQMSAYVELQEREFAAEERGYTATKHQREVGAGYFDRIATTVDPNSSTTALTGSTEEGQFH</sequence>
<proteinExistence type="inferred from homology"/>
<feature type="chain" id="PRO_0000068777" description="Isocitrate lyase 1">
    <location>
        <begin position="1"/>
        <end position="428"/>
    </location>
</feature>
<feature type="active site" description="Proton acceptor" evidence="1">
    <location>
        <position position="191"/>
    </location>
</feature>
<feature type="binding site" evidence="1">
    <location>
        <begin position="91"/>
        <end position="93"/>
    </location>
    <ligand>
        <name>substrate</name>
    </ligand>
</feature>
<feature type="binding site" evidence="1">
    <location>
        <position position="153"/>
    </location>
    <ligand>
        <name>Mg(2+)</name>
        <dbReference type="ChEBI" id="CHEBI:18420"/>
    </ligand>
</feature>
<feature type="binding site" evidence="1">
    <location>
        <begin position="192"/>
        <end position="193"/>
    </location>
    <ligand>
        <name>substrate</name>
    </ligand>
</feature>
<feature type="binding site" evidence="1">
    <location>
        <position position="228"/>
    </location>
    <ligand>
        <name>substrate</name>
    </ligand>
</feature>
<feature type="binding site" evidence="1">
    <location>
        <begin position="313"/>
        <end position="317"/>
    </location>
    <ligand>
        <name>substrate</name>
    </ligand>
</feature>
<feature type="binding site" evidence="1">
    <location>
        <position position="347"/>
    </location>
    <ligand>
        <name>substrate</name>
    </ligand>
</feature>
<organism>
    <name type="scientific">Mycobacterium bovis (strain ATCC BAA-935 / AF2122/97)</name>
    <dbReference type="NCBI Taxonomy" id="233413"/>
    <lineage>
        <taxon>Bacteria</taxon>
        <taxon>Bacillati</taxon>
        <taxon>Actinomycetota</taxon>
        <taxon>Actinomycetes</taxon>
        <taxon>Mycobacteriales</taxon>
        <taxon>Mycobacteriaceae</taxon>
        <taxon>Mycobacterium</taxon>
        <taxon>Mycobacterium tuberculosis complex</taxon>
    </lineage>
</organism>
<keyword id="KW-0329">Glyoxylate bypass</keyword>
<keyword id="KW-0456">Lyase</keyword>
<keyword id="KW-0460">Magnesium</keyword>
<keyword id="KW-0479">Metal-binding</keyword>
<keyword id="KW-1185">Reference proteome</keyword>
<keyword id="KW-0816">Tricarboxylic acid cycle</keyword>
<evidence type="ECO:0000250" key="1">
    <source>
        <dbReference type="UniProtKB" id="P9WKK7"/>
    </source>
</evidence>
<evidence type="ECO:0000269" key="2">
    <source>
    </source>
</evidence>
<evidence type="ECO:0000303" key="3">
    <source>
    </source>
</evidence>
<evidence type="ECO:0000305" key="4"/>
<evidence type="ECO:0000305" key="5">
    <source>
    </source>
</evidence>
<comment type="function">
    <text evidence="2">Involved in the persistence and virulence of Mycobacterium. Catalyzes the reversible formation of succinate and glyoxylate from isocitrate, a key step of the glyoxylate cycle, which operates as an anaplerotic route for replenishing the tricarboxylic acid cycle during growth on fatty acid substrates.</text>
</comment>
<comment type="catalytic activity">
    <reaction evidence="1">
        <text>D-threo-isocitrate = glyoxylate + succinate</text>
        <dbReference type="Rhea" id="RHEA:13245"/>
        <dbReference type="ChEBI" id="CHEBI:15562"/>
        <dbReference type="ChEBI" id="CHEBI:30031"/>
        <dbReference type="ChEBI" id="CHEBI:36655"/>
        <dbReference type="EC" id="4.1.3.1"/>
    </reaction>
</comment>
<comment type="cofactor">
    <cofactor evidence="1">
        <name>Mg(2+)</name>
        <dbReference type="ChEBI" id="CHEBI:18420"/>
    </cofactor>
</comment>
<comment type="pathway">
    <text evidence="5">Carbohydrate metabolism; glyoxylate cycle; (S)-malate from isocitrate: step 1/2.</text>
</comment>
<comment type="subunit">
    <text evidence="1">Homotetramer.</text>
</comment>
<comment type="disruption phenotype">
    <text evidence="2">cells lacking this gene show a slight residual isocitrate lyase activity.</text>
</comment>
<comment type="similarity">
    <text evidence="4">Belongs to the isocitrate lyase/PEP mutase superfamily. Isocitrate lyase family.</text>
</comment>
<dbReference type="EC" id="4.1.3.1" evidence="1"/>
<dbReference type="EMBL" id="LT708304">
    <property type="protein sequence ID" value="SIT99071.1"/>
    <property type="molecule type" value="Genomic_DNA"/>
</dbReference>
<dbReference type="RefSeq" id="NP_854139.1">
    <property type="nucleotide sequence ID" value="NC_002945.3"/>
</dbReference>
<dbReference type="SMR" id="P0A5H4"/>
<dbReference type="PATRIC" id="fig|233413.5.peg.518"/>
<dbReference type="UniPathway" id="UPA00703">
    <property type="reaction ID" value="UER00719"/>
</dbReference>
<dbReference type="Proteomes" id="UP000001419">
    <property type="component" value="Chromosome"/>
</dbReference>
<dbReference type="GO" id="GO:0004451">
    <property type="term" value="F:isocitrate lyase activity"/>
    <property type="evidence" value="ECO:0007669"/>
    <property type="project" value="UniProtKB-EC"/>
</dbReference>
<dbReference type="GO" id="GO:0046872">
    <property type="term" value="F:metal ion binding"/>
    <property type="evidence" value="ECO:0007669"/>
    <property type="project" value="UniProtKB-KW"/>
</dbReference>
<dbReference type="GO" id="GO:0006097">
    <property type="term" value="P:glyoxylate cycle"/>
    <property type="evidence" value="ECO:0007669"/>
    <property type="project" value="UniProtKB-UniPathway"/>
</dbReference>
<dbReference type="GO" id="GO:0006099">
    <property type="term" value="P:tricarboxylic acid cycle"/>
    <property type="evidence" value="ECO:0007669"/>
    <property type="project" value="UniProtKB-KW"/>
</dbReference>
<dbReference type="CDD" id="cd06556">
    <property type="entry name" value="ICL_KPHMT"/>
    <property type="match status" value="1"/>
</dbReference>
<dbReference type="FunFam" id="3.20.20.60:FF:000005">
    <property type="entry name" value="Isocitrate lyase"/>
    <property type="match status" value="1"/>
</dbReference>
<dbReference type="Gene3D" id="3.20.20.60">
    <property type="entry name" value="Phosphoenolpyruvate-binding domains"/>
    <property type="match status" value="1"/>
</dbReference>
<dbReference type="InterPro" id="IPR006254">
    <property type="entry name" value="Isocitrate_lyase"/>
</dbReference>
<dbReference type="InterPro" id="IPR018523">
    <property type="entry name" value="Isocitrate_lyase_ph_CS"/>
</dbReference>
<dbReference type="InterPro" id="IPR015813">
    <property type="entry name" value="Pyrv/PenolPyrv_kinase-like_dom"/>
</dbReference>
<dbReference type="InterPro" id="IPR040442">
    <property type="entry name" value="Pyrv_kinase-like_dom_sf"/>
</dbReference>
<dbReference type="NCBIfam" id="TIGR01346">
    <property type="entry name" value="isocit_lyase"/>
    <property type="match status" value="2"/>
</dbReference>
<dbReference type="NCBIfam" id="NF011645">
    <property type="entry name" value="PRK15063.1"/>
    <property type="match status" value="1"/>
</dbReference>
<dbReference type="PANTHER" id="PTHR21631:SF3">
    <property type="entry name" value="BIFUNCTIONAL GLYOXYLATE CYCLE PROTEIN"/>
    <property type="match status" value="1"/>
</dbReference>
<dbReference type="PANTHER" id="PTHR21631">
    <property type="entry name" value="ISOCITRATE LYASE/MALATE SYNTHASE"/>
    <property type="match status" value="1"/>
</dbReference>
<dbReference type="Pfam" id="PF00463">
    <property type="entry name" value="ICL"/>
    <property type="match status" value="2"/>
</dbReference>
<dbReference type="PIRSF" id="PIRSF001362">
    <property type="entry name" value="Isocit_lyase"/>
    <property type="match status" value="1"/>
</dbReference>
<dbReference type="SUPFAM" id="SSF51621">
    <property type="entry name" value="Phosphoenolpyruvate/pyruvate domain"/>
    <property type="match status" value="1"/>
</dbReference>
<dbReference type="PROSITE" id="PS00161">
    <property type="entry name" value="ISOCITRATE_LYASE"/>
    <property type="match status" value="1"/>
</dbReference>
<name>ACEA1_MYCBO</name>
<gene>
    <name type="primary">icl</name>
    <name type="ordered locus">BQ2027_MB0476</name>
</gene>
<protein>
    <recommendedName>
        <fullName evidence="3">Isocitrate lyase 1</fullName>
        <shortName evidence="3">ICL1</shortName>
        <ecNumber evidence="1">4.1.3.1</ecNumber>
    </recommendedName>
    <alternativeName>
        <fullName evidence="3">Isocitrase</fullName>
    </alternativeName>
    <alternativeName>
        <fullName evidence="3">Isocitratase</fullName>
    </alternativeName>
</protein>
<accession>P0A5H4</accession>
<accession>A0A1R3XVF5</accession>
<accession>O53752</accession>
<accession>X2BF40</accession>
<reference key="1">
    <citation type="journal article" date="2003" name="Proc. Natl. Acad. Sci. U.S.A.">
        <title>The complete genome sequence of Mycobacterium bovis.</title>
        <authorList>
            <person name="Garnier T."/>
            <person name="Eiglmeier K."/>
            <person name="Camus J.-C."/>
            <person name="Medina N."/>
            <person name="Mansoor H."/>
            <person name="Pryor M."/>
            <person name="Duthoy S."/>
            <person name="Grondin S."/>
            <person name="Lacroix C."/>
            <person name="Monsempe C."/>
            <person name="Simon S."/>
            <person name="Harris B."/>
            <person name="Atkin R."/>
            <person name="Doggett J."/>
            <person name="Mayes R."/>
            <person name="Keating L."/>
            <person name="Wheeler P.R."/>
            <person name="Parkhill J."/>
            <person name="Barrell B.G."/>
            <person name="Cole S.T."/>
            <person name="Gordon S.V."/>
            <person name="Hewinson R.G."/>
        </authorList>
    </citation>
    <scope>NUCLEOTIDE SEQUENCE [LARGE SCALE GENOMIC DNA]</scope>
    <source>
        <strain>ATCC BAA-935 / AF2122/97</strain>
    </source>
</reference>
<reference key="2">
    <citation type="journal article" date="2017" name="Genome Announc.">
        <title>Updated reference genome sequence and annotation of Mycobacterium bovis AF2122/97.</title>
        <authorList>
            <person name="Malone K.M."/>
            <person name="Farrell D."/>
            <person name="Stuber T.P."/>
            <person name="Schubert O.T."/>
            <person name="Aebersold R."/>
            <person name="Robbe-Austerman S."/>
            <person name="Gordon S.V."/>
        </authorList>
    </citation>
    <scope>NUCLEOTIDE SEQUENCE [LARGE SCALE GENOMIC DNA]</scope>
    <scope>GENOME REANNOTATION</scope>
    <source>
        <strain>ATCC BAA-935 / AF2122/97</strain>
    </source>
</reference>
<reference key="3">
    <citation type="journal article" date="2011" name="PLoS Pathog.">
        <title>13C metabolic flux analysis identifies an unusual route for pyruvate dissimilation in mycobacteria which requires isocitrate lyase and carbon dioxide fixation.</title>
        <authorList>
            <person name="Beste D.J."/>
            <person name="Bonde B."/>
            <person name="Hawkins N."/>
            <person name="Ward J.L."/>
            <person name="Beale M.H."/>
            <person name="Noack S."/>
            <person name="Noeh K."/>
            <person name="Kruger N.J."/>
            <person name="Ratcliffe R.G."/>
            <person name="McFadden J."/>
        </authorList>
    </citation>
    <scope>FUNCTION</scope>
    <scope>DISRUPTION PHENOTYPE</scope>
</reference>